<comment type="function">
    <text evidence="1">Catalyzes the attachment of threonine to tRNA(Thr) in a two-step reaction: L-threonine is first activated by ATP to form Thr-AMP and then transferred to the acceptor end of tRNA(Thr). Also edits incorrectly charged L-seryl-tRNA(Thr).</text>
</comment>
<comment type="catalytic activity">
    <reaction evidence="1">
        <text>tRNA(Thr) + L-threonine + ATP = L-threonyl-tRNA(Thr) + AMP + diphosphate + H(+)</text>
        <dbReference type="Rhea" id="RHEA:24624"/>
        <dbReference type="Rhea" id="RHEA-COMP:9670"/>
        <dbReference type="Rhea" id="RHEA-COMP:9704"/>
        <dbReference type="ChEBI" id="CHEBI:15378"/>
        <dbReference type="ChEBI" id="CHEBI:30616"/>
        <dbReference type="ChEBI" id="CHEBI:33019"/>
        <dbReference type="ChEBI" id="CHEBI:57926"/>
        <dbReference type="ChEBI" id="CHEBI:78442"/>
        <dbReference type="ChEBI" id="CHEBI:78534"/>
        <dbReference type="ChEBI" id="CHEBI:456215"/>
        <dbReference type="EC" id="6.1.1.3"/>
    </reaction>
</comment>
<comment type="cofactor">
    <cofactor evidence="1">
        <name>Zn(2+)</name>
        <dbReference type="ChEBI" id="CHEBI:29105"/>
    </cofactor>
    <text evidence="1">Binds 1 zinc ion per subunit.</text>
</comment>
<comment type="subunit">
    <text evidence="1">Homodimer.</text>
</comment>
<comment type="subcellular location">
    <subcellularLocation>
        <location evidence="1">Cytoplasm</location>
    </subcellularLocation>
</comment>
<comment type="similarity">
    <text evidence="1">Belongs to the class-II aminoacyl-tRNA synthetase family.</text>
</comment>
<protein>
    <recommendedName>
        <fullName evidence="1">Threonine--tRNA ligase</fullName>
        <ecNumber evidence="1">6.1.1.3</ecNumber>
    </recommendedName>
    <alternativeName>
        <fullName evidence="1">Threonyl-tRNA synthetase</fullName>
        <shortName evidence="1">ThrRS</shortName>
    </alternativeName>
</protein>
<gene>
    <name evidence="1" type="primary">thrS</name>
    <name type="ordered locus">amb0340</name>
</gene>
<proteinExistence type="inferred from homology"/>
<accession>Q2WAI1</accession>
<keyword id="KW-0030">Aminoacyl-tRNA synthetase</keyword>
<keyword id="KW-0067">ATP-binding</keyword>
<keyword id="KW-0963">Cytoplasm</keyword>
<keyword id="KW-0436">Ligase</keyword>
<keyword id="KW-0479">Metal-binding</keyword>
<keyword id="KW-0547">Nucleotide-binding</keyword>
<keyword id="KW-0648">Protein biosynthesis</keyword>
<keyword id="KW-0694">RNA-binding</keyword>
<keyword id="KW-0820">tRNA-binding</keyword>
<keyword id="KW-0862">Zinc</keyword>
<dbReference type="EC" id="6.1.1.3" evidence="1"/>
<dbReference type="EMBL" id="AP007255">
    <property type="protein sequence ID" value="BAE49144.1"/>
    <property type="molecule type" value="Genomic_DNA"/>
</dbReference>
<dbReference type="RefSeq" id="WP_011382787.1">
    <property type="nucleotide sequence ID" value="NC_007626.1"/>
</dbReference>
<dbReference type="SMR" id="Q2WAI1"/>
<dbReference type="STRING" id="342108.amb0340"/>
<dbReference type="KEGG" id="mag:amb0340"/>
<dbReference type="HOGENOM" id="CLU_008554_0_1_5"/>
<dbReference type="OrthoDB" id="9802304at2"/>
<dbReference type="Proteomes" id="UP000007058">
    <property type="component" value="Chromosome"/>
</dbReference>
<dbReference type="GO" id="GO:0005737">
    <property type="term" value="C:cytoplasm"/>
    <property type="evidence" value="ECO:0007669"/>
    <property type="project" value="UniProtKB-SubCell"/>
</dbReference>
<dbReference type="GO" id="GO:0005524">
    <property type="term" value="F:ATP binding"/>
    <property type="evidence" value="ECO:0007669"/>
    <property type="project" value="UniProtKB-UniRule"/>
</dbReference>
<dbReference type="GO" id="GO:0046872">
    <property type="term" value="F:metal ion binding"/>
    <property type="evidence" value="ECO:0007669"/>
    <property type="project" value="UniProtKB-KW"/>
</dbReference>
<dbReference type="GO" id="GO:0004829">
    <property type="term" value="F:threonine-tRNA ligase activity"/>
    <property type="evidence" value="ECO:0007669"/>
    <property type="project" value="UniProtKB-UniRule"/>
</dbReference>
<dbReference type="GO" id="GO:0000049">
    <property type="term" value="F:tRNA binding"/>
    <property type="evidence" value="ECO:0007669"/>
    <property type="project" value="UniProtKB-KW"/>
</dbReference>
<dbReference type="GO" id="GO:0006435">
    <property type="term" value="P:threonyl-tRNA aminoacylation"/>
    <property type="evidence" value="ECO:0007669"/>
    <property type="project" value="UniProtKB-UniRule"/>
</dbReference>
<dbReference type="CDD" id="cd01667">
    <property type="entry name" value="TGS_ThrRS"/>
    <property type="match status" value="1"/>
</dbReference>
<dbReference type="CDD" id="cd00860">
    <property type="entry name" value="ThrRS_anticodon"/>
    <property type="match status" value="1"/>
</dbReference>
<dbReference type="CDD" id="cd00771">
    <property type="entry name" value="ThrRS_core"/>
    <property type="match status" value="1"/>
</dbReference>
<dbReference type="FunFam" id="3.10.20.30:FF:000005">
    <property type="entry name" value="Threonine--tRNA ligase"/>
    <property type="match status" value="1"/>
</dbReference>
<dbReference type="FunFam" id="3.30.54.20:FF:000002">
    <property type="entry name" value="Threonine--tRNA ligase"/>
    <property type="match status" value="1"/>
</dbReference>
<dbReference type="FunFam" id="3.30.930.10:FF:000002">
    <property type="entry name" value="Threonine--tRNA ligase"/>
    <property type="match status" value="1"/>
</dbReference>
<dbReference type="FunFam" id="3.40.50.800:FF:000001">
    <property type="entry name" value="Threonine--tRNA ligase"/>
    <property type="match status" value="1"/>
</dbReference>
<dbReference type="FunFam" id="3.30.980.10:FF:000005">
    <property type="entry name" value="Threonyl-tRNA synthetase, mitochondrial"/>
    <property type="match status" value="1"/>
</dbReference>
<dbReference type="Gene3D" id="3.10.20.30">
    <property type="match status" value="1"/>
</dbReference>
<dbReference type="Gene3D" id="3.30.54.20">
    <property type="match status" value="1"/>
</dbReference>
<dbReference type="Gene3D" id="3.40.50.800">
    <property type="entry name" value="Anticodon-binding domain"/>
    <property type="match status" value="1"/>
</dbReference>
<dbReference type="Gene3D" id="3.30.930.10">
    <property type="entry name" value="Bira Bifunctional Protein, Domain 2"/>
    <property type="match status" value="1"/>
</dbReference>
<dbReference type="Gene3D" id="3.30.980.10">
    <property type="entry name" value="Threonyl-trna Synthetase, Chain A, domain 2"/>
    <property type="match status" value="1"/>
</dbReference>
<dbReference type="HAMAP" id="MF_00184">
    <property type="entry name" value="Thr_tRNA_synth"/>
    <property type="match status" value="1"/>
</dbReference>
<dbReference type="InterPro" id="IPR002314">
    <property type="entry name" value="aa-tRNA-synt_IIb"/>
</dbReference>
<dbReference type="InterPro" id="IPR006195">
    <property type="entry name" value="aa-tRNA-synth_II"/>
</dbReference>
<dbReference type="InterPro" id="IPR045864">
    <property type="entry name" value="aa-tRNA-synth_II/BPL/LPL"/>
</dbReference>
<dbReference type="InterPro" id="IPR004154">
    <property type="entry name" value="Anticodon-bd"/>
</dbReference>
<dbReference type="InterPro" id="IPR036621">
    <property type="entry name" value="Anticodon-bd_dom_sf"/>
</dbReference>
<dbReference type="InterPro" id="IPR012675">
    <property type="entry name" value="Beta-grasp_dom_sf"/>
</dbReference>
<dbReference type="InterPro" id="IPR004095">
    <property type="entry name" value="TGS"/>
</dbReference>
<dbReference type="InterPro" id="IPR012676">
    <property type="entry name" value="TGS-like"/>
</dbReference>
<dbReference type="InterPro" id="IPR002320">
    <property type="entry name" value="Thr-tRNA-ligase_IIa"/>
</dbReference>
<dbReference type="InterPro" id="IPR018163">
    <property type="entry name" value="Thr/Ala-tRNA-synth_IIc_edit"/>
</dbReference>
<dbReference type="InterPro" id="IPR047246">
    <property type="entry name" value="ThrRS_anticodon"/>
</dbReference>
<dbReference type="InterPro" id="IPR033728">
    <property type="entry name" value="ThrRS_core"/>
</dbReference>
<dbReference type="InterPro" id="IPR012947">
    <property type="entry name" value="tRNA_SAD"/>
</dbReference>
<dbReference type="NCBIfam" id="TIGR00418">
    <property type="entry name" value="thrS"/>
    <property type="match status" value="1"/>
</dbReference>
<dbReference type="PANTHER" id="PTHR11451:SF44">
    <property type="entry name" value="THREONINE--TRNA LIGASE, CHLOROPLASTIC_MITOCHONDRIAL 2"/>
    <property type="match status" value="1"/>
</dbReference>
<dbReference type="PANTHER" id="PTHR11451">
    <property type="entry name" value="THREONINE-TRNA LIGASE"/>
    <property type="match status" value="1"/>
</dbReference>
<dbReference type="Pfam" id="PF03129">
    <property type="entry name" value="HGTP_anticodon"/>
    <property type="match status" value="1"/>
</dbReference>
<dbReference type="Pfam" id="PF02824">
    <property type="entry name" value="TGS"/>
    <property type="match status" value="1"/>
</dbReference>
<dbReference type="Pfam" id="PF00587">
    <property type="entry name" value="tRNA-synt_2b"/>
    <property type="match status" value="1"/>
</dbReference>
<dbReference type="Pfam" id="PF07973">
    <property type="entry name" value="tRNA_SAD"/>
    <property type="match status" value="1"/>
</dbReference>
<dbReference type="PRINTS" id="PR01047">
    <property type="entry name" value="TRNASYNTHTHR"/>
</dbReference>
<dbReference type="SMART" id="SM00863">
    <property type="entry name" value="tRNA_SAD"/>
    <property type="match status" value="1"/>
</dbReference>
<dbReference type="SUPFAM" id="SSF52954">
    <property type="entry name" value="Class II aaRS ABD-related"/>
    <property type="match status" value="1"/>
</dbReference>
<dbReference type="SUPFAM" id="SSF55681">
    <property type="entry name" value="Class II aaRS and biotin synthetases"/>
    <property type="match status" value="1"/>
</dbReference>
<dbReference type="SUPFAM" id="SSF81271">
    <property type="entry name" value="TGS-like"/>
    <property type="match status" value="1"/>
</dbReference>
<dbReference type="SUPFAM" id="SSF55186">
    <property type="entry name" value="ThrRS/AlaRS common domain"/>
    <property type="match status" value="1"/>
</dbReference>
<dbReference type="PROSITE" id="PS50862">
    <property type="entry name" value="AA_TRNA_LIGASE_II"/>
    <property type="match status" value="1"/>
</dbReference>
<dbReference type="PROSITE" id="PS51880">
    <property type="entry name" value="TGS"/>
    <property type="match status" value="1"/>
</dbReference>
<name>SYT_PARM1</name>
<organism>
    <name type="scientific">Paramagnetospirillum magneticum (strain ATCC 700264 / AMB-1)</name>
    <name type="common">Magnetospirillum magneticum</name>
    <dbReference type="NCBI Taxonomy" id="342108"/>
    <lineage>
        <taxon>Bacteria</taxon>
        <taxon>Pseudomonadati</taxon>
        <taxon>Pseudomonadota</taxon>
        <taxon>Alphaproteobacteria</taxon>
        <taxon>Rhodospirillales</taxon>
        <taxon>Magnetospirillaceae</taxon>
        <taxon>Paramagnetospirillum</taxon>
    </lineage>
</organism>
<evidence type="ECO:0000255" key="1">
    <source>
        <dbReference type="HAMAP-Rule" id="MF_00184"/>
    </source>
</evidence>
<evidence type="ECO:0000255" key="2">
    <source>
        <dbReference type="PROSITE-ProRule" id="PRU01228"/>
    </source>
</evidence>
<reference key="1">
    <citation type="journal article" date="2005" name="DNA Res.">
        <title>Complete genome sequence of the facultative anaerobic magnetotactic bacterium Magnetospirillum sp. strain AMB-1.</title>
        <authorList>
            <person name="Matsunaga T."/>
            <person name="Okamura Y."/>
            <person name="Fukuda Y."/>
            <person name="Wahyudi A.T."/>
            <person name="Murase Y."/>
            <person name="Takeyama H."/>
        </authorList>
    </citation>
    <scope>NUCLEOTIDE SEQUENCE [LARGE SCALE GENOMIC DNA]</scope>
    <source>
        <strain>ATCC 700264 / AMB-1</strain>
    </source>
</reference>
<sequence>MVAITLPDGKVRQFDHPVTGLDVAKDIGPGLAKAALAITIDGEMKDLATLIDRDVNLSIITAKSGQDALELLRHDAAHVMAEAVKELYPETQVTIGPSIENGFYYDFARPTPFTPDDLAKIEARMAEIVDRDEAITREEWDRDAAVKFFEDAGEKYKAEIIASIPADQKIGLYRQGNFIDLCRGPHLPSTAKLGKAFKLMKLAGAYWRGDSRNEMLQRIYGTAWFDKKELDAYLHMLEEAEKRDHRRLGREMELFHQQEEAAGSVFWHKKGWTLYRAVESYMRRRLEANNYEEVKTPQLVDFSLWEASGHADKFSESMFTIKTQDERHLAVKPMNCPCHVQIFRQGIKSYRDLPLRMAEFGSCHRYEPSGALHGIMRVRAFTQDDAHIFCTEDQITSETIAFCQLLKEVYTDFGFTDVRVKFSDRPAKRAGSDETWDKAESALLEASKAAGLETVLNPGEGAFYGPKLEFVLRDAIGRDWQCGTLQVDFVLPERLDAAYVAEDGAKKRPVMLHRAILGSFERFLGILIENFAGRFPLWLAPTQVVVATIVSEADDFAREVEATLKAAGLRVELDLRNEKINYKVREHSVAKVPVMLVVGKREAESRQVAIRRLGSQNQEIVALDQAVATLAAEATPPA</sequence>
<feature type="chain" id="PRO_1000020420" description="Threonine--tRNA ligase">
    <location>
        <begin position="1"/>
        <end position="638"/>
    </location>
</feature>
<feature type="domain" description="TGS" evidence="2">
    <location>
        <begin position="1"/>
        <end position="61"/>
    </location>
</feature>
<feature type="region of interest" description="Catalytic" evidence="1">
    <location>
        <begin position="244"/>
        <end position="536"/>
    </location>
</feature>
<feature type="binding site" evidence="1">
    <location>
        <position position="336"/>
    </location>
    <ligand>
        <name>Zn(2+)</name>
        <dbReference type="ChEBI" id="CHEBI:29105"/>
    </ligand>
</feature>
<feature type="binding site" evidence="1">
    <location>
        <position position="387"/>
    </location>
    <ligand>
        <name>Zn(2+)</name>
        <dbReference type="ChEBI" id="CHEBI:29105"/>
    </ligand>
</feature>
<feature type="binding site" evidence="1">
    <location>
        <position position="513"/>
    </location>
    <ligand>
        <name>Zn(2+)</name>
        <dbReference type="ChEBI" id="CHEBI:29105"/>
    </ligand>
</feature>